<accession>Q2FIS8</accession>
<evidence type="ECO:0000255" key="1">
    <source>
        <dbReference type="HAMAP-Rule" id="MF_01633"/>
    </source>
</evidence>
<gene>
    <name evidence="1" type="primary">queC</name>
    <name type="ordered locus">SAUSA300_0697</name>
</gene>
<organism>
    <name type="scientific">Staphylococcus aureus (strain USA300)</name>
    <dbReference type="NCBI Taxonomy" id="367830"/>
    <lineage>
        <taxon>Bacteria</taxon>
        <taxon>Bacillati</taxon>
        <taxon>Bacillota</taxon>
        <taxon>Bacilli</taxon>
        <taxon>Bacillales</taxon>
        <taxon>Staphylococcaceae</taxon>
        <taxon>Staphylococcus</taxon>
    </lineage>
</organism>
<keyword id="KW-0067">ATP-binding</keyword>
<keyword id="KW-0436">Ligase</keyword>
<keyword id="KW-0479">Metal-binding</keyword>
<keyword id="KW-0547">Nucleotide-binding</keyword>
<keyword id="KW-0671">Queuosine biosynthesis</keyword>
<keyword id="KW-0862">Zinc</keyword>
<reference key="1">
    <citation type="journal article" date="2006" name="Lancet">
        <title>Complete genome sequence of USA300, an epidemic clone of community-acquired meticillin-resistant Staphylococcus aureus.</title>
        <authorList>
            <person name="Diep B.A."/>
            <person name="Gill S.R."/>
            <person name="Chang R.F."/>
            <person name="Phan T.H."/>
            <person name="Chen J.H."/>
            <person name="Davidson M.G."/>
            <person name="Lin F."/>
            <person name="Lin J."/>
            <person name="Carleton H.A."/>
            <person name="Mongodin E.F."/>
            <person name="Sensabaugh G.F."/>
            <person name="Perdreau-Remington F."/>
        </authorList>
    </citation>
    <scope>NUCLEOTIDE SEQUENCE [LARGE SCALE GENOMIC DNA]</scope>
    <source>
        <strain>USA300</strain>
    </source>
</reference>
<proteinExistence type="inferred from homology"/>
<comment type="function">
    <text evidence="1">Catalyzes the ATP-dependent conversion of 7-carboxy-7-deazaguanine (CDG) to 7-cyano-7-deazaguanine (preQ(0)).</text>
</comment>
<comment type="catalytic activity">
    <reaction evidence="1">
        <text>7-carboxy-7-deazaguanine + NH4(+) + ATP = 7-cyano-7-deazaguanine + ADP + phosphate + H2O + H(+)</text>
        <dbReference type="Rhea" id="RHEA:27982"/>
        <dbReference type="ChEBI" id="CHEBI:15377"/>
        <dbReference type="ChEBI" id="CHEBI:15378"/>
        <dbReference type="ChEBI" id="CHEBI:28938"/>
        <dbReference type="ChEBI" id="CHEBI:30616"/>
        <dbReference type="ChEBI" id="CHEBI:43474"/>
        <dbReference type="ChEBI" id="CHEBI:45075"/>
        <dbReference type="ChEBI" id="CHEBI:61036"/>
        <dbReference type="ChEBI" id="CHEBI:456216"/>
        <dbReference type="EC" id="6.3.4.20"/>
    </reaction>
</comment>
<comment type="cofactor">
    <cofactor evidence="1">
        <name>Zn(2+)</name>
        <dbReference type="ChEBI" id="CHEBI:29105"/>
    </cofactor>
    <text evidence="1">Binds 1 zinc ion per subunit.</text>
</comment>
<comment type="pathway">
    <text evidence="1">Purine metabolism; 7-cyano-7-deazaguanine biosynthesis.</text>
</comment>
<comment type="subunit">
    <text evidence="1">Homodimer.</text>
</comment>
<comment type="similarity">
    <text evidence="1">Belongs to the QueC family.</text>
</comment>
<feature type="chain" id="PRO_0000246936" description="7-cyano-7-deazaguanine synthase">
    <location>
        <begin position="1"/>
        <end position="222"/>
    </location>
</feature>
<feature type="binding site" evidence="1">
    <location>
        <begin position="14"/>
        <end position="24"/>
    </location>
    <ligand>
        <name>ATP</name>
        <dbReference type="ChEBI" id="CHEBI:30616"/>
    </ligand>
</feature>
<feature type="binding site" evidence="1">
    <location>
        <position position="190"/>
    </location>
    <ligand>
        <name>Zn(2+)</name>
        <dbReference type="ChEBI" id="CHEBI:29105"/>
    </ligand>
</feature>
<feature type="binding site" evidence="1">
    <location>
        <position position="199"/>
    </location>
    <ligand>
        <name>Zn(2+)</name>
        <dbReference type="ChEBI" id="CHEBI:29105"/>
    </ligand>
</feature>
<feature type="binding site" evidence="1">
    <location>
        <position position="202"/>
    </location>
    <ligand>
        <name>Zn(2+)</name>
        <dbReference type="ChEBI" id="CHEBI:29105"/>
    </ligand>
</feature>
<feature type="binding site" evidence="1">
    <location>
        <position position="205"/>
    </location>
    <ligand>
        <name>Zn(2+)</name>
        <dbReference type="ChEBI" id="CHEBI:29105"/>
    </ligand>
</feature>
<name>QUEC_STAA3</name>
<sequence>MESVLNNEKAIVVFSGGQDSTTCLFYAKKHFKEVELVTFNYGQRHDTEIEVAKQIAQDQGMKHHVLDMSLLSQLTPNALTQHDMEITNNEDGIPNTFVPARNLLFLSFAGALAYQIGAKHIITGVCETDFSGYPDCRDSFIKSMNVTLSLAMDKDFVIHTPLMWLNKAETWKLSDELEVLDYIRTKTLTCYNGIIGDGCGECPACHLRQRGLNQYLESKGAL</sequence>
<dbReference type="EC" id="6.3.4.20" evidence="1"/>
<dbReference type="EMBL" id="CP000255">
    <property type="protein sequence ID" value="ABD20983.1"/>
    <property type="molecule type" value="Genomic_DNA"/>
</dbReference>
<dbReference type="RefSeq" id="WP_000446724.1">
    <property type="nucleotide sequence ID" value="NZ_CP027476.1"/>
</dbReference>
<dbReference type="SMR" id="Q2FIS8"/>
<dbReference type="KEGG" id="saa:SAUSA300_0697"/>
<dbReference type="HOGENOM" id="CLU_081854_0_0_9"/>
<dbReference type="OMA" id="VWVPNRN"/>
<dbReference type="UniPathway" id="UPA00391"/>
<dbReference type="Proteomes" id="UP000001939">
    <property type="component" value="Chromosome"/>
</dbReference>
<dbReference type="GO" id="GO:0005524">
    <property type="term" value="F:ATP binding"/>
    <property type="evidence" value="ECO:0007669"/>
    <property type="project" value="UniProtKB-UniRule"/>
</dbReference>
<dbReference type="GO" id="GO:0016879">
    <property type="term" value="F:ligase activity, forming carbon-nitrogen bonds"/>
    <property type="evidence" value="ECO:0007669"/>
    <property type="project" value="UniProtKB-UniRule"/>
</dbReference>
<dbReference type="GO" id="GO:0008270">
    <property type="term" value="F:zinc ion binding"/>
    <property type="evidence" value="ECO:0007669"/>
    <property type="project" value="UniProtKB-UniRule"/>
</dbReference>
<dbReference type="GO" id="GO:0008616">
    <property type="term" value="P:queuosine biosynthetic process"/>
    <property type="evidence" value="ECO:0007669"/>
    <property type="project" value="UniProtKB-UniRule"/>
</dbReference>
<dbReference type="CDD" id="cd01995">
    <property type="entry name" value="QueC-like"/>
    <property type="match status" value="1"/>
</dbReference>
<dbReference type="FunFam" id="3.40.50.620:FF:000017">
    <property type="entry name" value="7-cyano-7-deazaguanine synthase"/>
    <property type="match status" value="1"/>
</dbReference>
<dbReference type="Gene3D" id="3.40.50.620">
    <property type="entry name" value="HUPs"/>
    <property type="match status" value="1"/>
</dbReference>
<dbReference type="HAMAP" id="MF_01633">
    <property type="entry name" value="QueC"/>
    <property type="match status" value="1"/>
</dbReference>
<dbReference type="InterPro" id="IPR018317">
    <property type="entry name" value="QueC"/>
</dbReference>
<dbReference type="InterPro" id="IPR014729">
    <property type="entry name" value="Rossmann-like_a/b/a_fold"/>
</dbReference>
<dbReference type="NCBIfam" id="TIGR00364">
    <property type="entry name" value="7-cyano-7-deazaguanine synthase QueC"/>
    <property type="match status" value="1"/>
</dbReference>
<dbReference type="PANTHER" id="PTHR42914">
    <property type="entry name" value="7-CYANO-7-DEAZAGUANINE SYNTHASE"/>
    <property type="match status" value="1"/>
</dbReference>
<dbReference type="PANTHER" id="PTHR42914:SF1">
    <property type="entry name" value="7-CYANO-7-DEAZAGUANINE SYNTHASE"/>
    <property type="match status" value="1"/>
</dbReference>
<dbReference type="Pfam" id="PF06508">
    <property type="entry name" value="QueC"/>
    <property type="match status" value="1"/>
</dbReference>
<dbReference type="PIRSF" id="PIRSF006293">
    <property type="entry name" value="ExsB"/>
    <property type="match status" value="1"/>
</dbReference>
<dbReference type="SUPFAM" id="SSF52402">
    <property type="entry name" value="Adenine nucleotide alpha hydrolases-like"/>
    <property type="match status" value="1"/>
</dbReference>
<protein>
    <recommendedName>
        <fullName evidence="1">7-cyano-7-deazaguanine synthase</fullName>
        <ecNumber evidence="1">6.3.4.20</ecNumber>
    </recommendedName>
    <alternativeName>
        <fullName evidence="1">7-cyano-7-carbaguanine synthase</fullName>
    </alternativeName>
    <alternativeName>
        <fullName evidence="1">PreQ(0) synthase</fullName>
    </alternativeName>
    <alternativeName>
        <fullName evidence="1">Queuosine biosynthesis protein QueC</fullName>
    </alternativeName>
</protein>